<reference key="1">
    <citation type="journal article" date="2003" name="Proc. Natl. Acad. Sci. U.S.A.">
        <title>Complete genome sequence of Lactobacillus plantarum WCFS1.</title>
        <authorList>
            <person name="Kleerebezem M."/>
            <person name="Boekhorst J."/>
            <person name="van Kranenburg R."/>
            <person name="Molenaar D."/>
            <person name="Kuipers O.P."/>
            <person name="Leer R."/>
            <person name="Tarchini R."/>
            <person name="Peters S.A."/>
            <person name="Sandbrink H.M."/>
            <person name="Fiers M.W.E.J."/>
            <person name="Stiekema W."/>
            <person name="Klein Lankhorst R.M."/>
            <person name="Bron P.A."/>
            <person name="Hoffer S.M."/>
            <person name="Nierop Groot M.N."/>
            <person name="Kerkhoven R."/>
            <person name="De Vries M."/>
            <person name="Ursing B."/>
            <person name="De Vos W.M."/>
            <person name="Siezen R.J."/>
        </authorList>
    </citation>
    <scope>NUCLEOTIDE SEQUENCE [LARGE SCALE GENOMIC DNA]</scope>
    <source>
        <strain>ATCC BAA-793 / NCIMB 8826 / WCFS1</strain>
    </source>
</reference>
<reference key="2">
    <citation type="journal article" date="2012" name="J. Bacteriol.">
        <title>Complete resequencing and reannotation of the Lactobacillus plantarum WCFS1 genome.</title>
        <authorList>
            <person name="Siezen R.J."/>
            <person name="Francke C."/>
            <person name="Renckens B."/>
            <person name="Boekhorst J."/>
            <person name="Wels M."/>
            <person name="Kleerebezem M."/>
            <person name="van Hijum S.A."/>
        </authorList>
    </citation>
    <scope>NUCLEOTIDE SEQUENCE [LARGE SCALE GENOMIC DNA]</scope>
    <scope>GENOME REANNOTATION</scope>
    <source>
        <strain>ATCC BAA-793 / NCIMB 8826 / WCFS1</strain>
    </source>
</reference>
<protein>
    <recommendedName>
        <fullName evidence="1">Glutamine--fructose-6-phosphate aminotransferase [isomerizing]</fullName>
        <ecNumber evidence="1">2.6.1.16</ecNumber>
    </recommendedName>
    <alternativeName>
        <fullName evidence="1">D-fructose-6-phosphate amidotransferase</fullName>
    </alternativeName>
    <alternativeName>
        <fullName evidence="1">GFAT</fullName>
    </alternativeName>
    <alternativeName>
        <fullName evidence="1">Glucosamine-6-phosphate synthase</fullName>
    </alternativeName>
    <alternativeName>
        <fullName evidence="1">Hexosephosphate aminotransferase</fullName>
    </alternativeName>
    <alternativeName>
        <fullName evidence="1">L-glutamine--D-fructose-6-phosphate amidotransferase</fullName>
    </alternativeName>
</protein>
<keyword id="KW-0032">Aminotransferase</keyword>
<keyword id="KW-0963">Cytoplasm</keyword>
<keyword id="KW-0315">Glutamine amidotransferase</keyword>
<keyword id="KW-1185">Reference proteome</keyword>
<keyword id="KW-0677">Repeat</keyword>
<keyword id="KW-0808">Transferase</keyword>
<sequence length="605" mass="65467">MCGIVGVTGKDSAVSILLNGLEKLEYRGYDSAGIYVNDQDGHDYLVKEKGRIDDLRKEVGEAVHGSTGIGHTRWATHGEPSVANAHPQVSADGRFYLVHNGVIENFEDLKQTYLSDVTFKSQTDTEVIVQLVDRFVTKEGLSTLAAFRKTLGLLGHSSYGFLLMDKEDPDTLYVAKNKSPLLIGVGEGFNVVCSDSLAMLDQTKDFLELHDGEIVVVKPDEIKITNQAGEPVERKPFHVDIDAAQADKGTYPFYMLKEIDEQPNVMRKLSQVYLNDAGDPIINDDLLTALKAADRLYIVAAGTSYHAGLVGAKLFESLANVPTEVHVSSEFAYNQPLLSAHPFFIFLTQSGETADSREVLLNVNDQHFPSLTITNVPNSTLSREATYTLLLHAGPEIAVASTKAYTAQIALQAILAKALGVAVDQPAATAFDVKQQLALVANGMQSLVDEKATFEKIAKSALLNTPNAFYIGRGLDYAVSLETALKLKEISYVQAEGFASGELKHGTIALIEKDTPVIGIITQKNTAGLTRSNLQEVAARGAKTVTIVTDSLAKDGDTVILPTVDERLTALLSVVPGQLLAYYTSLNKGLDVDKPRNLAKSVTVE</sequence>
<gene>
    <name evidence="1" type="primary">glmS</name>
    <name type="synonym">glmS1</name>
    <name type="ordered locus">lp_0822</name>
</gene>
<proteinExistence type="inferred from homology"/>
<dbReference type="EC" id="2.6.1.16" evidence="1"/>
<dbReference type="EMBL" id="AL935263">
    <property type="protein sequence ID" value="CCC78279.1"/>
    <property type="molecule type" value="Genomic_DNA"/>
</dbReference>
<dbReference type="RefSeq" id="WP_003641075.1">
    <property type="nucleotide sequence ID" value="NC_004567.2"/>
</dbReference>
<dbReference type="RefSeq" id="YP_004888793.1">
    <property type="nucleotide sequence ID" value="NC_004567.2"/>
</dbReference>
<dbReference type="SMR" id="Q88YE7"/>
<dbReference type="STRING" id="220668.lp_0822"/>
<dbReference type="EnsemblBacteria" id="CCC78279">
    <property type="protein sequence ID" value="CCC78279"/>
    <property type="gene ID" value="lp_0822"/>
</dbReference>
<dbReference type="GeneID" id="77217341"/>
<dbReference type="KEGG" id="lpl:lp_0822"/>
<dbReference type="PATRIC" id="fig|220668.9.peg.697"/>
<dbReference type="eggNOG" id="COG0449">
    <property type="taxonomic scope" value="Bacteria"/>
</dbReference>
<dbReference type="HOGENOM" id="CLU_012520_7_1_9"/>
<dbReference type="OrthoDB" id="106547at2"/>
<dbReference type="PhylomeDB" id="Q88YE7"/>
<dbReference type="Proteomes" id="UP000000432">
    <property type="component" value="Chromosome"/>
</dbReference>
<dbReference type="GO" id="GO:0005829">
    <property type="term" value="C:cytosol"/>
    <property type="evidence" value="ECO:0007669"/>
    <property type="project" value="TreeGrafter"/>
</dbReference>
<dbReference type="GO" id="GO:0097367">
    <property type="term" value="F:carbohydrate derivative binding"/>
    <property type="evidence" value="ECO:0007669"/>
    <property type="project" value="InterPro"/>
</dbReference>
<dbReference type="GO" id="GO:0004360">
    <property type="term" value="F:glutamine-fructose-6-phosphate transaminase (isomerizing) activity"/>
    <property type="evidence" value="ECO:0007669"/>
    <property type="project" value="UniProtKB-UniRule"/>
</dbReference>
<dbReference type="GO" id="GO:0005975">
    <property type="term" value="P:carbohydrate metabolic process"/>
    <property type="evidence" value="ECO:0007669"/>
    <property type="project" value="UniProtKB-UniRule"/>
</dbReference>
<dbReference type="GO" id="GO:0006002">
    <property type="term" value="P:fructose 6-phosphate metabolic process"/>
    <property type="evidence" value="ECO:0007669"/>
    <property type="project" value="TreeGrafter"/>
</dbReference>
<dbReference type="GO" id="GO:0006487">
    <property type="term" value="P:protein N-linked glycosylation"/>
    <property type="evidence" value="ECO:0007669"/>
    <property type="project" value="TreeGrafter"/>
</dbReference>
<dbReference type="GO" id="GO:0006047">
    <property type="term" value="P:UDP-N-acetylglucosamine metabolic process"/>
    <property type="evidence" value="ECO:0007669"/>
    <property type="project" value="TreeGrafter"/>
</dbReference>
<dbReference type="CDD" id="cd00714">
    <property type="entry name" value="GFAT"/>
    <property type="match status" value="1"/>
</dbReference>
<dbReference type="CDD" id="cd05008">
    <property type="entry name" value="SIS_GlmS_GlmD_1"/>
    <property type="match status" value="1"/>
</dbReference>
<dbReference type="CDD" id="cd05009">
    <property type="entry name" value="SIS_GlmS_GlmD_2"/>
    <property type="match status" value="1"/>
</dbReference>
<dbReference type="FunFam" id="3.40.50.10490:FF:000022">
    <property type="entry name" value="Glutamine--fructose-6-phosphate aminotransferase [isomerizing]"/>
    <property type="match status" value="1"/>
</dbReference>
<dbReference type="FunFam" id="3.60.20.10:FF:000006">
    <property type="entry name" value="Glutamine--fructose-6-phosphate aminotransferase [isomerizing]"/>
    <property type="match status" value="1"/>
</dbReference>
<dbReference type="Gene3D" id="3.40.50.10490">
    <property type="entry name" value="Glucose-6-phosphate isomerase like protein, domain 1"/>
    <property type="match status" value="2"/>
</dbReference>
<dbReference type="Gene3D" id="3.60.20.10">
    <property type="entry name" value="Glutamine Phosphoribosylpyrophosphate, subunit 1, domain 1"/>
    <property type="match status" value="1"/>
</dbReference>
<dbReference type="HAMAP" id="MF_00164">
    <property type="entry name" value="GlmS"/>
    <property type="match status" value="1"/>
</dbReference>
<dbReference type="InterPro" id="IPR017932">
    <property type="entry name" value="GATase_2_dom"/>
</dbReference>
<dbReference type="InterPro" id="IPR005855">
    <property type="entry name" value="GFAT"/>
</dbReference>
<dbReference type="InterPro" id="IPR047084">
    <property type="entry name" value="GFAT_N"/>
</dbReference>
<dbReference type="InterPro" id="IPR035466">
    <property type="entry name" value="GlmS/AgaS_SIS"/>
</dbReference>
<dbReference type="InterPro" id="IPR035490">
    <property type="entry name" value="GlmS/FrlB_SIS"/>
</dbReference>
<dbReference type="InterPro" id="IPR029055">
    <property type="entry name" value="Ntn_hydrolases_N"/>
</dbReference>
<dbReference type="InterPro" id="IPR001347">
    <property type="entry name" value="SIS_dom"/>
</dbReference>
<dbReference type="InterPro" id="IPR046348">
    <property type="entry name" value="SIS_dom_sf"/>
</dbReference>
<dbReference type="NCBIfam" id="TIGR01135">
    <property type="entry name" value="glmS"/>
    <property type="match status" value="1"/>
</dbReference>
<dbReference type="NCBIfam" id="NF001484">
    <property type="entry name" value="PRK00331.1"/>
    <property type="match status" value="1"/>
</dbReference>
<dbReference type="PANTHER" id="PTHR10937">
    <property type="entry name" value="GLUCOSAMINE--FRUCTOSE-6-PHOSPHATE AMINOTRANSFERASE, ISOMERIZING"/>
    <property type="match status" value="1"/>
</dbReference>
<dbReference type="PANTHER" id="PTHR10937:SF0">
    <property type="entry name" value="GLUTAMINE--FRUCTOSE-6-PHOSPHATE TRANSAMINASE (ISOMERIZING)"/>
    <property type="match status" value="1"/>
</dbReference>
<dbReference type="Pfam" id="PF13522">
    <property type="entry name" value="GATase_6"/>
    <property type="match status" value="1"/>
</dbReference>
<dbReference type="Pfam" id="PF01380">
    <property type="entry name" value="SIS"/>
    <property type="match status" value="2"/>
</dbReference>
<dbReference type="SUPFAM" id="SSF56235">
    <property type="entry name" value="N-terminal nucleophile aminohydrolases (Ntn hydrolases)"/>
    <property type="match status" value="1"/>
</dbReference>
<dbReference type="SUPFAM" id="SSF53697">
    <property type="entry name" value="SIS domain"/>
    <property type="match status" value="1"/>
</dbReference>
<dbReference type="PROSITE" id="PS51278">
    <property type="entry name" value="GATASE_TYPE_2"/>
    <property type="match status" value="1"/>
</dbReference>
<dbReference type="PROSITE" id="PS51464">
    <property type="entry name" value="SIS"/>
    <property type="match status" value="2"/>
</dbReference>
<evidence type="ECO:0000255" key="1">
    <source>
        <dbReference type="HAMAP-Rule" id="MF_00164"/>
    </source>
</evidence>
<organism>
    <name type="scientific">Lactiplantibacillus plantarum (strain ATCC BAA-793 / NCIMB 8826 / WCFS1)</name>
    <name type="common">Lactobacillus plantarum</name>
    <dbReference type="NCBI Taxonomy" id="220668"/>
    <lineage>
        <taxon>Bacteria</taxon>
        <taxon>Bacillati</taxon>
        <taxon>Bacillota</taxon>
        <taxon>Bacilli</taxon>
        <taxon>Lactobacillales</taxon>
        <taxon>Lactobacillaceae</taxon>
        <taxon>Lactiplantibacillus</taxon>
    </lineage>
</organism>
<name>GLMS_LACPL</name>
<accession>Q88YE7</accession>
<accession>F9UM40</accession>
<comment type="function">
    <text evidence="1">Catalyzes the first step in hexosamine metabolism, converting fructose-6P into glucosamine-6P using glutamine as a nitrogen source.</text>
</comment>
<comment type="catalytic activity">
    <reaction evidence="1">
        <text>D-fructose 6-phosphate + L-glutamine = D-glucosamine 6-phosphate + L-glutamate</text>
        <dbReference type="Rhea" id="RHEA:13237"/>
        <dbReference type="ChEBI" id="CHEBI:29985"/>
        <dbReference type="ChEBI" id="CHEBI:58359"/>
        <dbReference type="ChEBI" id="CHEBI:58725"/>
        <dbReference type="ChEBI" id="CHEBI:61527"/>
        <dbReference type="EC" id="2.6.1.16"/>
    </reaction>
</comment>
<comment type="subunit">
    <text evidence="1">Homodimer.</text>
</comment>
<comment type="subcellular location">
    <subcellularLocation>
        <location evidence="1">Cytoplasm</location>
    </subcellularLocation>
</comment>
<feature type="initiator methionine" description="Removed" evidence="1">
    <location>
        <position position="1"/>
    </location>
</feature>
<feature type="chain" id="PRO_0000135344" description="Glutamine--fructose-6-phosphate aminotransferase [isomerizing]">
    <location>
        <begin position="2"/>
        <end position="605"/>
    </location>
</feature>
<feature type="domain" description="Glutamine amidotransferase type-2" evidence="1">
    <location>
        <begin position="2"/>
        <end position="220"/>
    </location>
</feature>
<feature type="domain" description="SIS 1" evidence="1">
    <location>
        <begin position="286"/>
        <end position="426"/>
    </location>
</feature>
<feature type="domain" description="SIS 2" evidence="1">
    <location>
        <begin position="458"/>
        <end position="595"/>
    </location>
</feature>
<feature type="active site" description="Nucleophile; for GATase activity" evidence="1">
    <location>
        <position position="2"/>
    </location>
</feature>
<feature type="active site" description="For Fru-6P isomerization activity" evidence="1">
    <location>
        <position position="600"/>
    </location>
</feature>